<feature type="chain" id="PRO_0000196140" description="Cuticle protein 4">
    <location>
        <begin position="1"/>
        <end position="127"/>
    </location>
</feature>
<feature type="repeat" description="1">
    <location>
        <begin position="31"/>
        <end position="39"/>
    </location>
</feature>
<feature type="repeat" description="2">
    <location>
        <begin position="84"/>
        <end position="92"/>
    </location>
</feature>
<feature type="modified residue" description="Pyrrolidone carboxylic acid" evidence="1">
    <location>
        <position position="1"/>
    </location>
</feature>
<evidence type="ECO:0000269" key="1">
    <source>
    </source>
</evidence>
<keyword id="KW-0193">Cuticle</keyword>
<keyword id="KW-0903">Direct protein sequencing</keyword>
<keyword id="KW-0873">Pyrrolidone carboxylic acid</keyword>
<keyword id="KW-0677">Repeat</keyword>
<proteinExistence type="evidence at protein level"/>
<accession>P80675</accession>
<reference key="1">
    <citation type="journal article" date="1997" name="Insect Biochem. Mol. Biol.">
        <title>Cuticular proteins from the giant cockroach, Blaberus craniifer.</title>
        <authorList>
            <person name="Jensen U.G."/>
            <person name="Rothmann A."/>
            <person name="Skou L."/>
            <person name="Andersen S.O."/>
            <person name="Roepstorff P."/>
            <person name="Hoejrup P."/>
        </authorList>
    </citation>
    <scope>PROTEIN SEQUENCE</scope>
    <scope>PYROGLUTAMATE FORMATION AT GLN-1</scope>
    <source>
        <tissue>Polyric caeca</tissue>
    </source>
</reference>
<name>CU04_BLACR</name>
<organism>
    <name type="scientific">Blaberus craniifer</name>
    <name type="common">Death's head cockroach</name>
    <dbReference type="NCBI Taxonomy" id="6982"/>
    <lineage>
        <taxon>Eukaryota</taxon>
        <taxon>Metazoa</taxon>
        <taxon>Ecdysozoa</taxon>
        <taxon>Arthropoda</taxon>
        <taxon>Hexapoda</taxon>
        <taxon>Insecta</taxon>
        <taxon>Pterygota</taxon>
        <taxon>Neoptera</taxon>
        <taxon>Polyneoptera</taxon>
        <taxon>Dictyoptera</taxon>
        <taxon>Blattodea</taxon>
        <taxon>Blaberoidea</taxon>
        <taxon>Blaberidae</taxon>
        <taxon>Blaberinae</taxon>
        <taxon>Blaberus</taxon>
    </lineage>
</organism>
<dbReference type="GO" id="GO:0004730">
    <property type="term" value="F:pseudouridylate synthase activity"/>
    <property type="evidence" value="ECO:0007669"/>
    <property type="project" value="InterPro"/>
</dbReference>
<dbReference type="GO" id="GO:0042302">
    <property type="term" value="F:structural constituent of cuticle"/>
    <property type="evidence" value="ECO:0007669"/>
    <property type="project" value="UniProtKB-KW"/>
</dbReference>
<dbReference type="InterPro" id="IPR022830">
    <property type="entry name" value="Indigdn_synthA-like"/>
</dbReference>
<dbReference type="SUPFAM" id="SSF110581">
    <property type="entry name" value="Indigoidine synthase A-like"/>
    <property type="match status" value="1"/>
</dbReference>
<sequence length="127" mass="13384">QAVLYPSIYSILSKSKVRVQELEPVEGAAVPADTKKAEIKEKEHEVITHGLPVPYSSVVQPIVSSVVVNPGVIPAVVPVDAPTPADTKKAEISDNAVVAYHAAISPLSVVSHPVVSPLVHVPQVVYV</sequence>
<protein>
    <recommendedName>
        <fullName>Cuticle protein 4</fullName>
    </recommendedName>
    <alternativeName>
        <fullName>Bc-NCP4</fullName>
    </alternativeName>
</protein>